<evidence type="ECO:0000250" key="1"/>
<evidence type="ECO:0000255" key="2">
    <source>
        <dbReference type="PROSITE-ProRule" id="PRU00040"/>
    </source>
</evidence>
<evidence type="ECO:0000305" key="3"/>
<name>SLA2_MACLB</name>
<proteinExistence type="evidence at transcript level"/>
<organism>
    <name type="scientific">Macrovipera lebetinus</name>
    <name type="common">Levantine viper</name>
    <name type="synonym">Vipera lebetina</name>
    <dbReference type="NCBI Taxonomy" id="3148341"/>
    <lineage>
        <taxon>Eukaryota</taxon>
        <taxon>Metazoa</taxon>
        <taxon>Chordata</taxon>
        <taxon>Craniata</taxon>
        <taxon>Vertebrata</taxon>
        <taxon>Euteleostomi</taxon>
        <taxon>Lepidosauria</taxon>
        <taxon>Squamata</taxon>
        <taxon>Bifurcata</taxon>
        <taxon>Unidentata</taxon>
        <taxon>Episquamata</taxon>
        <taxon>Toxicofera</taxon>
        <taxon>Serpentes</taxon>
        <taxon>Colubroidea</taxon>
        <taxon>Viperidae</taxon>
        <taxon>Viperinae</taxon>
        <taxon>Macrovipera</taxon>
    </lineage>
</organism>
<comment type="function">
    <text evidence="1">Interferes with one step of hemostasis (modulation of platelet aggregation, or coagulation cascade, for example).</text>
</comment>
<comment type="subunit">
    <text evidence="1">Heterodimer; disulfide-linked.</text>
</comment>
<comment type="subcellular location">
    <subcellularLocation>
        <location evidence="1">Secreted</location>
    </subcellularLocation>
</comment>
<comment type="tissue specificity">
    <text>Expressed by the venom gland.</text>
</comment>
<comment type="miscellaneous">
    <text>Shows greater sequence similarity to the alpha than beta subunits compared to other heterodimer snaclecs.</text>
</comment>
<comment type="similarity">
    <text evidence="3">Belongs to the snaclec family.</text>
</comment>
<sequence>MGRLISVSFGLLVVFLSLSGTGADQDCLPGWSSHEGHCYKVFNLDKTWEDAEKFCTEQANSGHLVSIDSKKEANFVAELVSQNIKETRRTDFVWIGLRAEDKRQHCSSEWSDGSSINYQNWIEAESKKCLGLEKQTRYRKWVNLNCGQPYRFTCEI</sequence>
<keyword id="KW-1015">Disulfide bond</keyword>
<keyword id="KW-1199">Hemostasis impairing toxin</keyword>
<keyword id="KW-0964">Secreted</keyword>
<keyword id="KW-0732">Signal</keyword>
<keyword id="KW-0800">Toxin</keyword>
<protein>
    <recommendedName>
        <fullName>Snaclec A2</fullName>
    </recommendedName>
    <alternativeName>
        <fullName>C-type lectin A2</fullName>
    </alternativeName>
</protein>
<reference key="1">
    <citation type="journal article" date="2009" name="Toxicon">
        <title>C-type lectin protein isoforms of Macrovipera lebetina: cDNA cloning and genetic diversity.</title>
        <authorList>
            <person name="Jebali J."/>
            <person name="Bazaa A."/>
            <person name="Sarray S."/>
            <person name="Benhaj K."/>
            <person name="Karboul A."/>
            <person name="El Ayeb M."/>
            <person name="Marrakchi N."/>
            <person name="Gargouri A."/>
        </authorList>
    </citation>
    <scope>NUCLEOTIDE SEQUENCE [MRNA]</scope>
</reference>
<dbReference type="EMBL" id="EU085454">
    <property type="protein sequence ID" value="ABW82664.1"/>
    <property type="molecule type" value="mRNA"/>
</dbReference>
<dbReference type="SMR" id="B4XSZ2"/>
<dbReference type="GO" id="GO:0005576">
    <property type="term" value="C:extracellular region"/>
    <property type="evidence" value="ECO:0007669"/>
    <property type="project" value="UniProtKB-SubCell"/>
</dbReference>
<dbReference type="GO" id="GO:0090729">
    <property type="term" value="F:toxin activity"/>
    <property type="evidence" value="ECO:0007669"/>
    <property type="project" value="UniProtKB-KW"/>
</dbReference>
<dbReference type="FunFam" id="3.10.100.10:FF:000087">
    <property type="entry name" value="Snaclec rhodocetin subunit delta"/>
    <property type="match status" value="1"/>
</dbReference>
<dbReference type="Gene3D" id="3.10.100.10">
    <property type="entry name" value="Mannose-Binding Protein A, subunit A"/>
    <property type="match status" value="1"/>
</dbReference>
<dbReference type="InterPro" id="IPR001304">
    <property type="entry name" value="C-type_lectin-like"/>
</dbReference>
<dbReference type="InterPro" id="IPR016186">
    <property type="entry name" value="C-type_lectin-like/link_sf"/>
</dbReference>
<dbReference type="InterPro" id="IPR050111">
    <property type="entry name" value="C-type_lectin/snaclec_domain"/>
</dbReference>
<dbReference type="InterPro" id="IPR018378">
    <property type="entry name" value="C-type_lectin_CS"/>
</dbReference>
<dbReference type="InterPro" id="IPR016187">
    <property type="entry name" value="CTDL_fold"/>
</dbReference>
<dbReference type="PANTHER" id="PTHR22803">
    <property type="entry name" value="MANNOSE, PHOSPHOLIPASE, LECTIN RECEPTOR RELATED"/>
    <property type="match status" value="1"/>
</dbReference>
<dbReference type="Pfam" id="PF00059">
    <property type="entry name" value="Lectin_C"/>
    <property type="match status" value="1"/>
</dbReference>
<dbReference type="SMART" id="SM00034">
    <property type="entry name" value="CLECT"/>
    <property type="match status" value="1"/>
</dbReference>
<dbReference type="SUPFAM" id="SSF56436">
    <property type="entry name" value="C-type lectin-like"/>
    <property type="match status" value="1"/>
</dbReference>
<dbReference type="PROSITE" id="PS00615">
    <property type="entry name" value="C_TYPE_LECTIN_1"/>
    <property type="match status" value="1"/>
</dbReference>
<dbReference type="PROSITE" id="PS50041">
    <property type="entry name" value="C_TYPE_LECTIN_2"/>
    <property type="match status" value="1"/>
</dbReference>
<accession>B4XSZ2</accession>
<feature type="signal peptide" evidence="1">
    <location>
        <begin position="1"/>
        <end position="23"/>
    </location>
</feature>
<feature type="chain" id="PRO_0000356318" description="Snaclec A2">
    <location>
        <begin position="24"/>
        <end position="156"/>
    </location>
</feature>
<feature type="domain" description="C-type lectin" evidence="2">
    <location>
        <begin position="34"/>
        <end position="155"/>
    </location>
</feature>
<feature type="disulfide bond" evidence="2">
    <location>
        <begin position="27"/>
        <end position="38"/>
    </location>
</feature>
<feature type="disulfide bond" evidence="2">
    <location>
        <begin position="55"/>
        <end position="154"/>
    </location>
</feature>
<feature type="disulfide bond" description="Interchain" evidence="2">
    <location>
        <position position="106"/>
    </location>
</feature>
<feature type="disulfide bond" evidence="2">
    <location>
        <begin position="129"/>
        <end position="146"/>
    </location>
</feature>